<keyword id="KW-0067">ATP-binding</keyword>
<keyword id="KW-0997">Cell inner membrane</keyword>
<keyword id="KW-1003">Cell membrane</keyword>
<keyword id="KW-0472">Membrane</keyword>
<keyword id="KW-0547">Nucleotide-binding</keyword>
<keyword id="KW-0918">Phosphonate transport</keyword>
<keyword id="KW-1278">Translocase</keyword>
<keyword id="KW-0813">Transport</keyword>
<organism>
    <name type="scientific">Rhodopseudomonas palustris (strain ATCC BAA-98 / CGA009)</name>
    <dbReference type="NCBI Taxonomy" id="258594"/>
    <lineage>
        <taxon>Bacteria</taxon>
        <taxon>Pseudomonadati</taxon>
        <taxon>Pseudomonadota</taxon>
        <taxon>Alphaproteobacteria</taxon>
        <taxon>Hyphomicrobiales</taxon>
        <taxon>Nitrobacteraceae</taxon>
        <taxon>Rhodopseudomonas</taxon>
    </lineage>
</organism>
<proteinExistence type="inferred from homology"/>
<feature type="chain" id="PRO_0000092727" description="Phosphonates import ATP-binding protein PhnC 2">
    <location>
        <begin position="1"/>
        <end position="284"/>
    </location>
</feature>
<feature type="domain" description="ABC transporter" evidence="1">
    <location>
        <begin position="24"/>
        <end position="264"/>
    </location>
</feature>
<feature type="binding site" evidence="1">
    <location>
        <begin position="56"/>
        <end position="63"/>
    </location>
    <ligand>
        <name>ATP</name>
        <dbReference type="ChEBI" id="CHEBI:30616"/>
    </ligand>
</feature>
<sequence>MGAEWLPVRKLGMVRGISPDSNLIRIDGISVRRGHRTVLHDVTASFPTAKVTAIVGPSGVGKTTMLGLLNGLIAPASGTVSFSEIGLLTEPTALRAARHQTATIFQDHALIGRLSAIDNVLLGLADTRHPLSPLPWPVAARQRAAKALDDVGLLDLATRRTAQLSGGERQRVGVARALIRRPKLLLGDEPFASVDPALAQQLGGLFRSLAMREGLTVILVLHQLQLARAIADRIIGLSDGRVAFDGPAAAFDADLEARIFPSLALSHDHSPPLSQPKETICSID</sequence>
<reference key="1">
    <citation type="journal article" date="2004" name="Nat. Biotechnol.">
        <title>Complete genome sequence of the metabolically versatile photosynthetic bacterium Rhodopseudomonas palustris.</title>
        <authorList>
            <person name="Larimer F.W."/>
            <person name="Chain P."/>
            <person name="Hauser L."/>
            <person name="Lamerdin J.E."/>
            <person name="Malfatti S."/>
            <person name="Do L."/>
            <person name="Land M.L."/>
            <person name="Pelletier D.A."/>
            <person name="Beatty J.T."/>
            <person name="Lang A.S."/>
            <person name="Tabita F.R."/>
            <person name="Gibson J.L."/>
            <person name="Hanson T.E."/>
            <person name="Bobst C."/>
            <person name="Torres y Torres J.L."/>
            <person name="Peres C."/>
            <person name="Harrison F.H."/>
            <person name="Gibson J."/>
            <person name="Harwood C.S."/>
        </authorList>
    </citation>
    <scope>NUCLEOTIDE SEQUENCE [LARGE SCALE GENOMIC DNA]</scope>
    <source>
        <strain>ATCC BAA-98 / CGA009</strain>
    </source>
</reference>
<accession>Q6NA00</accession>
<comment type="function">
    <text evidence="1">Part of the ABC transporter complex PhnCDE involved in phosphonates import. Responsible for energy coupling to the transport system.</text>
</comment>
<comment type="catalytic activity">
    <reaction evidence="1">
        <text>phosphonate(out) + ATP + H2O = phosphonate(in) + ADP + phosphate + H(+)</text>
        <dbReference type="Rhea" id="RHEA:18065"/>
        <dbReference type="ChEBI" id="CHEBI:15377"/>
        <dbReference type="ChEBI" id="CHEBI:15378"/>
        <dbReference type="ChEBI" id="CHEBI:16215"/>
        <dbReference type="ChEBI" id="CHEBI:30616"/>
        <dbReference type="ChEBI" id="CHEBI:43474"/>
        <dbReference type="ChEBI" id="CHEBI:456216"/>
        <dbReference type="EC" id="7.3.2.2"/>
    </reaction>
</comment>
<comment type="subunit">
    <text evidence="1">The complex is composed of two ATP-binding proteins (PhnC), two transmembrane proteins (PhnE) and a solute-binding protein (PhnD).</text>
</comment>
<comment type="subcellular location">
    <subcellularLocation>
        <location evidence="1">Cell inner membrane</location>
        <topology evidence="1">Peripheral membrane protein</topology>
    </subcellularLocation>
</comment>
<comment type="similarity">
    <text evidence="1">Belongs to the ABC transporter superfamily. Phosphonates importer (TC 3.A.1.9.1) family.</text>
</comment>
<dbReference type="EC" id="7.3.2.2" evidence="1"/>
<dbReference type="EMBL" id="BX572597">
    <property type="protein sequence ID" value="CAE26829.1"/>
    <property type="molecule type" value="Genomic_DNA"/>
</dbReference>
<dbReference type="SMR" id="Q6NA00"/>
<dbReference type="STRING" id="258594.RPA1386"/>
<dbReference type="eggNOG" id="COG3638">
    <property type="taxonomic scope" value="Bacteria"/>
</dbReference>
<dbReference type="HOGENOM" id="CLU_000604_1_22_5"/>
<dbReference type="PhylomeDB" id="Q6NA00"/>
<dbReference type="GO" id="GO:0005886">
    <property type="term" value="C:plasma membrane"/>
    <property type="evidence" value="ECO:0007669"/>
    <property type="project" value="UniProtKB-SubCell"/>
</dbReference>
<dbReference type="GO" id="GO:0015416">
    <property type="term" value="F:ABC-type phosphonate transporter activity"/>
    <property type="evidence" value="ECO:0007669"/>
    <property type="project" value="UniProtKB-EC"/>
</dbReference>
<dbReference type="GO" id="GO:0005524">
    <property type="term" value="F:ATP binding"/>
    <property type="evidence" value="ECO:0007669"/>
    <property type="project" value="UniProtKB-KW"/>
</dbReference>
<dbReference type="GO" id="GO:0016887">
    <property type="term" value="F:ATP hydrolysis activity"/>
    <property type="evidence" value="ECO:0007669"/>
    <property type="project" value="InterPro"/>
</dbReference>
<dbReference type="CDD" id="cd03256">
    <property type="entry name" value="ABC_PhnC_transporter"/>
    <property type="match status" value="1"/>
</dbReference>
<dbReference type="Gene3D" id="3.40.50.300">
    <property type="entry name" value="P-loop containing nucleotide triphosphate hydrolases"/>
    <property type="match status" value="1"/>
</dbReference>
<dbReference type="InterPro" id="IPR003593">
    <property type="entry name" value="AAA+_ATPase"/>
</dbReference>
<dbReference type="InterPro" id="IPR003439">
    <property type="entry name" value="ABC_transporter-like_ATP-bd"/>
</dbReference>
<dbReference type="InterPro" id="IPR017871">
    <property type="entry name" value="ABC_transporter-like_CS"/>
</dbReference>
<dbReference type="InterPro" id="IPR012693">
    <property type="entry name" value="ABC_transpr_PhnC"/>
</dbReference>
<dbReference type="InterPro" id="IPR050086">
    <property type="entry name" value="MetN_ABC_transporter-like"/>
</dbReference>
<dbReference type="InterPro" id="IPR027417">
    <property type="entry name" value="P-loop_NTPase"/>
</dbReference>
<dbReference type="PANTHER" id="PTHR43166">
    <property type="entry name" value="AMINO ACID IMPORT ATP-BINDING PROTEIN"/>
    <property type="match status" value="1"/>
</dbReference>
<dbReference type="PANTHER" id="PTHR43166:SF6">
    <property type="entry name" value="PHOSPHONATES IMPORT ATP-BINDING PROTEIN PHNC"/>
    <property type="match status" value="1"/>
</dbReference>
<dbReference type="Pfam" id="PF00005">
    <property type="entry name" value="ABC_tran"/>
    <property type="match status" value="1"/>
</dbReference>
<dbReference type="SMART" id="SM00382">
    <property type="entry name" value="AAA"/>
    <property type="match status" value="1"/>
</dbReference>
<dbReference type="SUPFAM" id="SSF52540">
    <property type="entry name" value="P-loop containing nucleoside triphosphate hydrolases"/>
    <property type="match status" value="1"/>
</dbReference>
<dbReference type="PROSITE" id="PS00211">
    <property type="entry name" value="ABC_TRANSPORTER_1"/>
    <property type="match status" value="1"/>
</dbReference>
<dbReference type="PROSITE" id="PS50893">
    <property type="entry name" value="ABC_TRANSPORTER_2"/>
    <property type="match status" value="1"/>
</dbReference>
<dbReference type="PROSITE" id="PS51249">
    <property type="entry name" value="PHNC"/>
    <property type="match status" value="1"/>
</dbReference>
<name>PHNC2_RHOPA</name>
<evidence type="ECO:0000255" key="1">
    <source>
        <dbReference type="HAMAP-Rule" id="MF_01713"/>
    </source>
</evidence>
<gene>
    <name evidence="1" type="primary">phnC2</name>
    <name type="ordered locus">RPA1386</name>
</gene>
<protein>
    <recommendedName>
        <fullName evidence="1">Phosphonates import ATP-binding protein PhnC 2</fullName>
        <ecNumber evidence="1">7.3.2.2</ecNumber>
    </recommendedName>
</protein>